<feature type="chain" id="PRO_1000034287" description="Transcription elongation factor GreA">
    <location>
        <begin position="1"/>
        <end position="162"/>
    </location>
</feature>
<feature type="region of interest" description="Disordered" evidence="2">
    <location>
        <begin position="111"/>
        <end position="132"/>
    </location>
</feature>
<feature type="coiled-coil region" evidence="1">
    <location>
        <begin position="48"/>
        <end position="76"/>
    </location>
</feature>
<name>GREA_OENOB</name>
<proteinExistence type="inferred from homology"/>
<reference key="1">
    <citation type="journal article" date="2006" name="Proc. Natl. Acad. Sci. U.S.A.">
        <title>Comparative genomics of the lactic acid bacteria.</title>
        <authorList>
            <person name="Makarova K.S."/>
            <person name="Slesarev A."/>
            <person name="Wolf Y.I."/>
            <person name="Sorokin A."/>
            <person name="Mirkin B."/>
            <person name="Koonin E.V."/>
            <person name="Pavlov A."/>
            <person name="Pavlova N."/>
            <person name="Karamychev V."/>
            <person name="Polouchine N."/>
            <person name="Shakhova V."/>
            <person name="Grigoriev I."/>
            <person name="Lou Y."/>
            <person name="Rohksar D."/>
            <person name="Lucas S."/>
            <person name="Huang K."/>
            <person name="Goodstein D.M."/>
            <person name="Hawkins T."/>
            <person name="Plengvidhya V."/>
            <person name="Welker D."/>
            <person name="Hughes J."/>
            <person name="Goh Y."/>
            <person name="Benson A."/>
            <person name="Baldwin K."/>
            <person name="Lee J.-H."/>
            <person name="Diaz-Muniz I."/>
            <person name="Dosti B."/>
            <person name="Smeianov V."/>
            <person name="Wechter W."/>
            <person name="Barabote R."/>
            <person name="Lorca G."/>
            <person name="Altermann E."/>
            <person name="Barrangou R."/>
            <person name="Ganesan B."/>
            <person name="Xie Y."/>
            <person name="Rawsthorne H."/>
            <person name="Tamir D."/>
            <person name="Parker C."/>
            <person name="Breidt F."/>
            <person name="Broadbent J.R."/>
            <person name="Hutkins R."/>
            <person name="O'Sullivan D."/>
            <person name="Steele J."/>
            <person name="Unlu G."/>
            <person name="Saier M.H. Jr."/>
            <person name="Klaenhammer T."/>
            <person name="Richardson P."/>
            <person name="Kozyavkin S."/>
            <person name="Weimer B.C."/>
            <person name="Mills D.A."/>
        </authorList>
    </citation>
    <scope>NUCLEOTIDE SEQUENCE [LARGE SCALE GENOMIC DNA]</scope>
    <source>
        <strain>ATCC BAA-331 / PSU-1</strain>
    </source>
</reference>
<gene>
    <name evidence="1" type="primary">greA</name>
    <name type="ordered locus">OEOE_1246</name>
</gene>
<dbReference type="EMBL" id="CP000411">
    <property type="protein sequence ID" value="ABJ57122.1"/>
    <property type="molecule type" value="Genomic_DNA"/>
</dbReference>
<dbReference type="RefSeq" id="WP_002819112.1">
    <property type="nucleotide sequence ID" value="NC_008528.1"/>
</dbReference>
<dbReference type="SMR" id="Q04EK0"/>
<dbReference type="STRING" id="203123.OEOE_1246"/>
<dbReference type="GeneID" id="75065650"/>
<dbReference type="KEGG" id="ooe:OEOE_1246"/>
<dbReference type="eggNOG" id="COG0782">
    <property type="taxonomic scope" value="Bacteria"/>
</dbReference>
<dbReference type="HOGENOM" id="CLU_101379_2_1_9"/>
<dbReference type="Proteomes" id="UP000000774">
    <property type="component" value="Chromosome"/>
</dbReference>
<dbReference type="GO" id="GO:0003677">
    <property type="term" value="F:DNA binding"/>
    <property type="evidence" value="ECO:0007669"/>
    <property type="project" value="UniProtKB-UniRule"/>
</dbReference>
<dbReference type="GO" id="GO:0070063">
    <property type="term" value="F:RNA polymerase binding"/>
    <property type="evidence" value="ECO:0007669"/>
    <property type="project" value="InterPro"/>
</dbReference>
<dbReference type="GO" id="GO:0006354">
    <property type="term" value="P:DNA-templated transcription elongation"/>
    <property type="evidence" value="ECO:0007669"/>
    <property type="project" value="TreeGrafter"/>
</dbReference>
<dbReference type="GO" id="GO:0032784">
    <property type="term" value="P:regulation of DNA-templated transcription elongation"/>
    <property type="evidence" value="ECO:0007669"/>
    <property type="project" value="UniProtKB-UniRule"/>
</dbReference>
<dbReference type="FunFam" id="1.10.287.180:FF:000001">
    <property type="entry name" value="Transcription elongation factor GreA"/>
    <property type="match status" value="1"/>
</dbReference>
<dbReference type="FunFam" id="3.10.50.30:FF:000001">
    <property type="entry name" value="Transcription elongation factor GreA"/>
    <property type="match status" value="1"/>
</dbReference>
<dbReference type="Gene3D" id="3.10.50.30">
    <property type="entry name" value="Transcription elongation factor, GreA/GreB, C-terminal domain"/>
    <property type="match status" value="1"/>
</dbReference>
<dbReference type="Gene3D" id="1.10.287.180">
    <property type="entry name" value="Transcription elongation factor, GreA/GreB, N-terminal domain"/>
    <property type="match status" value="1"/>
</dbReference>
<dbReference type="HAMAP" id="MF_00105">
    <property type="entry name" value="GreA_GreB"/>
    <property type="match status" value="1"/>
</dbReference>
<dbReference type="InterPro" id="IPR036953">
    <property type="entry name" value="GreA/GreB_C_sf"/>
</dbReference>
<dbReference type="InterPro" id="IPR018151">
    <property type="entry name" value="TF_GreA/GreB_CS"/>
</dbReference>
<dbReference type="InterPro" id="IPR006359">
    <property type="entry name" value="Tscrpt_elong_fac_GreA"/>
</dbReference>
<dbReference type="InterPro" id="IPR028624">
    <property type="entry name" value="Tscrpt_elong_fac_GreA/B"/>
</dbReference>
<dbReference type="InterPro" id="IPR001437">
    <property type="entry name" value="Tscrpt_elong_fac_GreA/B_C"/>
</dbReference>
<dbReference type="InterPro" id="IPR023459">
    <property type="entry name" value="Tscrpt_elong_fac_GreA/B_fam"/>
</dbReference>
<dbReference type="InterPro" id="IPR022691">
    <property type="entry name" value="Tscrpt_elong_fac_GreA/B_N"/>
</dbReference>
<dbReference type="InterPro" id="IPR036805">
    <property type="entry name" value="Tscrpt_elong_fac_GreA/B_N_sf"/>
</dbReference>
<dbReference type="NCBIfam" id="TIGR01462">
    <property type="entry name" value="greA"/>
    <property type="match status" value="1"/>
</dbReference>
<dbReference type="NCBIfam" id="NF001263">
    <property type="entry name" value="PRK00226.1-4"/>
    <property type="match status" value="1"/>
</dbReference>
<dbReference type="PANTHER" id="PTHR30437">
    <property type="entry name" value="TRANSCRIPTION ELONGATION FACTOR GREA"/>
    <property type="match status" value="1"/>
</dbReference>
<dbReference type="PANTHER" id="PTHR30437:SF4">
    <property type="entry name" value="TRANSCRIPTION ELONGATION FACTOR GREA"/>
    <property type="match status" value="1"/>
</dbReference>
<dbReference type="Pfam" id="PF01272">
    <property type="entry name" value="GreA_GreB"/>
    <property type="match status" value="1"/>
</dbReference>
<dbReference type="Pfam" id="PF03449">
    <property type="entry name" value="GreA_GreB_N"/>
    <property type="match status" value="1"/>
</dbReference>
<dbReference type="PIRSF" id="PIRSF006092">
    <property type="entry name" value="GreA_GreB"/>
    <property type="match status" value="1"/>
</dbReference>
<dbReference type="SUPFAM" id="SSF54534">
    <property type="entry name" value="FKBP-like"/>
    <property type="match status" value="1"/>
</dbReference>
<dbReference type="SUPFAM" id="SSF46557">
    <property type="entry name" value="GreA transcript cleavage protein, N-terminal domain"/>
    <property type="match status" value="1"/>
</dbReference>
<dbReference type="PROSITE" id="PS00829">
    <property type="entry name" value="GREAB_1"/>
    <property type="match status" value="1"/>
</dbReference>
<dbReference type="PROSITE" id="PS00830">
    <property type="entry name" value="GREAB_2"/>
    <property type="match status" value="1"/>
</dbReference>
<organism>
    <name type="scientific">Oenococcus oeni (strain ATCC BAA-331 / PSU-1)</name>
    <dbReference type="NCBI Taxonomy" id="203123"/>
    <lineage>
        <taxon>Bacteria</taxon>
        <taxon>Bacillati</taxon>
        <taxon>Bacillota</taxon>
        <taxon>Bacilli</taxon>
        <taxon>Lactobacillales</taxon>
        <taxon>Lactobacillaceae</taxon>
        <taxon>Oenococcus</taxon>
    </lineage>
</organism>
<sequence length="162" mass="17707">MAEEKTYPMTAEGLAKLQAELDDLITNKRPAITSRIQEARSFGDLSENSEYQSAKDEQAFVEGRVKQLQQMIQFAQVIDASSASKNVVTLGKKISFKEVPDGDEETYTIVGSAESDPLSGKISNDSPMGKALLDHKTGDKVEIPLPENHSVTVEILHVSKAK</sequence>
<accession>Q04EK0</accession>
<keyword id="KW-0175">Coiled coil</keyword>
<keyword id="KW-0238">DNA-binding</keyword>
<keyword id="KW-1185">Reference proteome</keyword>
<keyword id="KW-0804">Transcription</keyword>
<keyword id="KW-0805">Transcription regulation</keyword>
<protein>
    <recommendedName>
        <fullName evidence="1">Transcription elongation factor GreA</fullName>
    </recommendedName>
    <alternativeName>
        <fullName evidence="1">Transcript cleavage factor GreA</fullName>
    </alternativeName>
</protein>
<evidence type="ECO:0000255" key="1">
    <source>
        <dbReference type="HAMAP-Rule" id="MF_00105"/>
    </source>
</evidence>
<evidence type="ECO:0000256" key="2">
    <source>
        <dbReference type="SAM" id="MobiDB-lite"/>
    </source>
</evidence>
<comment type="function">
    <text evidence="1">Necessary for efficient RNA polymerase transcription elongation past template-encoded arresting sites. The arresting sites in DNA have the property of trapping a certain fraction of elongating RNA polymerases that pass through, resulting in locked ternary complexes. Cleavage of the nascent transcript by cleavage factors such as GreA or GreB allows the resumption of elongation from the new 3'terminus. GreA releases sequences of 2 to 3 nucleotides.</text>
</comment>
<comment type="similarity">
    <text evidence="1">Belongs to the GreA/GreB family.</text>
</comment>